<reference key="1">
    <citation type="journal article" date="2000" name="Nature">
        <title>Complete DNA sequence of a serogroup A strain of Neisseria meningitidis Z2491.</title>
        <authorList>
            <person name="Parkhill J."/>
            <person name="Achtman M."/>
            <person name="James K.D."/>
            <person name="Bentley S.D."/>
            <person name="Churcher C.M."/>
            <person name="Klee S.R."/>
            <person name="Morelli G."/>
            <person name="Basham D."/>
            <person name="Brown D."/>
            <person name="Chillingworth T."/>
            <person name="Davies R.M."/>
            <person name="Davis P."/>
            <person name="Devlin K."/>
            <person name="Feltwell T."/>
            <person name="Hamlin N."/>
            <person name="Holroyd S."/>
            <person name="Jagels K."/>
            <person name="Leather S."/>
            <person name="Moule S."/>
            <person name="Mungall K.L."/>
            <person name="Quail M.A."/>
            <person name="Rajandream M.A."/>
            <person name="Rutherford K.M."/>
            <person name="Simmonds M."/>
            <person name="Skelton J."/>
            <person name="Whitehead S."/>
            <person name="Spratt B.G."/>
            <person name="Barrell B.G."/>
        </authorList>
    </citation>
    <scope>NUCLEOTIDE SEQUENCE [LARGE SCALE GENOMIC DNA]</scope>
    <source>
        <strain>DSM 15465 / Z2491</strain>
    </source>
</reference>
<accession>A1IQ34</accession>
<dbReference type="EC" id="2.8.4.3" evidence="1"/>
<dbReference type="EMBL" id="AL157959">
    <property type="protein sequence ID" value="CAM07860.1"/>
    <property type="molecule type" value="Genomic_DNA"/>
</dbReference>
<dbReference type="PIR" id="C81978">
    <property type="entry name" value="C81978"/>
</dbReference>
<dbReference type="RefSeq" id="WP_010981098.1">
    <property type="nucleotide sequence ID" value="NC_003116.1"/>
</dbReference>
<dbReference type="SMR" id="A1IQ34"/>
<dbReference type="EnsemblBacteria" id="CAM07860">
    <property type="protein sequence ID" value="CAM07860"/>
    <property type="gene ID" value="NMA0590"/>
</dbReference>
<dbReference type="KEGG" id="nma:NMA0590"/>
<dbReference type="HOGENOM" id="CLU_018697_2_0_4"/>
<dbReference type="Proteomes" id="UP000000626">
    <property type="component" value="Chromosome"/>
</dbReference>
<dbReference type="GO" id="GO:0005829">
    <property type="term" value="C:cytosol"/>
    <property type="evidence" value="ECO:0007669"/>
    <property type="project" value="TreeGrafter"/>
</dbReference>
<dbReference type="GO" id="GO:0051539">
    <property type="term" value="F:4 iron, 4 sulfur cluster binding"/>
    <property type="evidence" value="ECO:0007669"/>
    <property type="project" value="UniProtKB-UniRule"/>
</dbReference>
<dbReference type="GO" id="GO:0046872">
    <property type="term" value="F:metal ion binding"/>
    <property type="evidence" value="ECO:0007669"/>
    <property type="project" value="UniProtKB-KW"/>
</dbReference>
<dbReference type="GO" id="GO:0035597">
    <property type="term" value="F:N6-isopentenyladenosine methylthiotransferase activity"/>
    <property type="evidence" value="ECO:0007669"/>
    <property type="project" value="TreeGrafter"/>
</dbReference>
<dbReference type="CDD" id="cd01335">
    <property type="entry name" value="Radical_SAM"/>
    <property type="match status" value="1"/>
</dbReference>
<dbReference type="FunFam" id="3.40.50.12160:FF:000001">
    <property type="entry name" value="tRNA-2-methylthio-N(6)-dimethylallyladenosine synthase"/>
    <property type="match status" value="1"/>
</dbReference>
<dbReference type="FunFam" id="3.80.30.20:FF:000001">
    <property type="entry name" value="tRNA-2-methylthio-N(6)-dimethylallyladenosine synthase 2"/>
    <property type="match status" value="1"/>
</dbReference>
<dbReference type="Gene3D" id="3.40.50.12160">
    <property type="entry name" value="Methylthiotransferase, N-terminal domain"/>
    <property type="match status" value="1"/>
</dbReference>
<dbReference type="Gene3D" id="3.80.30.20">
    <property type="entry name" value="tm_1862 like domain"/>
    <property type="match status" value="1"/>
</dbReference>
<dbReference type="HAMAP" id="MF_01864">
    <property type="entry name" value="tRNA_metthiotr_MiaB"/>
    <property type="match status" value="1"/>
</dbReference>
<dbReference type="InterPro" id="IPR006638">
    <property type="entry name" value="Elp3/MiaA/NifB-like_rSAM"/>
</dbReference>
<dbReference type="InterPro" id="IPR005839">
    <property type="entry name" value="Methylthiotransferase"/>
</dbReference>
<dbReference type="InterPro" id="IPR020612">
    <property type="entry name" value="Methylthiotransferase_CS"/>
</dbReference>
<dbReference type="InterPro" id="IPR013848">
    <property type="entry name" value="Methylthiotransferase_N"/>
</dbReference>
<dbReference type="InterPro" id="IPR038135">
    <property type="entry name" value="Methylthiotransferase_N_sf"/>
</dbReference>
<dbReference type="InterPro" id="IPR006463">
    <property type="entry name" value="MiaB_methiolase"/>
</dbReference>
<dbReference type="InterPro" id="IPR007197">
    <property type="entry name" value="rSAM"/>
</dbReference>
<dbReference type="InterPro" id="IPR023404">
    <property type="entry name" value="rSAM_horseshoe"/>
</dbReference>
<dbReference type="InterPro" id="IPR002792">
    <property type="entry name" value="TRAM_dom"/>
</dbReference>
<dbReference type="NCBIfam" id="TIGR01574">
    <property type="entry name" value="miaB-methiolase"/>
    <property type="match status" value="1"/>
</dbReference>
<dbReference type="NCBIfam" id="TIGR00089">
    <property type="entry name" value="MiaB/RimO family radical SAM methylthiotransferase"/>
    <property type="match status" value="1"/>
</dbReference>
<dbReference type="PANTHER" id="PTHR43020">
    <property type="entry name" value="CDK5 REGULATORY SUBUNIT-ASSOCIATED PROTEIN 1"/>
    <property type="match status" value="1"/>
</dbReference>
<dbReference type="PANTHER" id="PTHR43020:SF2">
    <property type="entry name" value="MITOCHONDRIAL TRNA METHYLTHIOTRANSFERASE CDK5RAP1"/>
    <property type="match status" value="1"/>
</dbReference>
<dbReference type="Pfam" id="PF04055">
    <property type="entry name" value="Radical_SAM"/>
    <property type="match status" value="1"/>
</dbReference>
<dbReference type="Pfam" id="PF01938">
    <property type="entry name" value="TRAM"/>
    <property type="match status" value="1"/>
</dbReference>
<dbReference type="Pfam" id="PF00919">
    <property type="entry name" value="UPF0004"/>
    <property type="match status" value="1"/>
</dbReference>
<dbReference type="SFLD" id="SFLDF00273">
    <property type="entry name" value="(dimethylallyl)adenosine_tRNA"/>
    <property type="match status" value="1"/>
</dbReference>
<dbReference type="SFLD" id="SFLDG01082">
    <property type="entry name" value="B12-binding_domain_containing"/>
    <property type="match status" value="1"/>
</dbReference>
<dbReference type="SFLD" id="SFLDG01061">
    <property type="entry name" value="methylthiotransferase"/>
    <property type="match status" value="1"/>
</dbReference>
<dbReference type="SMART" id="SM00729">
    <property type="entry name" value="Elp3"/>
    <property type="match status" value="1"/>
</dbReference>
<dbReference type="SUPFAM" id="SSF102114">
    <property type="entry name" value="Radical SAM enzymes"/>
    <property type="match status" value="1"/>
</dbReference>
<dbReference type="PROSITE" id="PS51449">
    <property type="entry name" value="MTTASE_N"/>
    <property type="match status" value="1"/>
</dbReference>
<dbReference type="PROSITE" id="PS01278">
    <property type="entry name" value="MTTASE_RADICAL"/>
    <property type="match status" value="1"/>
</dbReference>
<dbReference type="PROSITE" id="PS51918">
    <property type="entry name" value="RADICAL_SAM"/>
    <property type="match status" value="1"/>
</dbReference>
<dbReference type="PROSITE" id="PS50926">
    <property type="entry name" value="TRAM"/>
    <property type="match status" value="1"/>
</dbReference>
<gene>
    <name evidence="1" type="primary">miaB</name>
    <name type="ordered locus">NMA0590</name>
</gene>
<sequence>MKKVFIRTFGCQMNEYDSDKMLAVLAEEHGGIEQVTQADEADIILFNTCSVREKAQEKVFSDLGRVRPLKEKKPGLIIGVAGCVASQEGENIIKRAPYVDVVFGPQTLHRLPKMIVDKETSGLSQVDISFPEIEKFDHLPPARVEGGAAFVSIMEGCSKYCSFCVVPYTRGEEFSRPLNDVLTEIANLAQQGVKEINLLGQNVNAYRGEMDDGEICDFATLLRIVHEIPGIERMRFTTSHPREFTDSIIECYRDLPKLVSHLHLPIQSGSDRVLSAMKRGYTALEYKSIIRKLRAIRPDLCLSSDFIVGFPGETEREFEQTLKLVKDIAFDLSFVFIYSPRPGTPAANLHDDTPHEEKVRRLEALNEVIEAETARINQTMIGTVQRCLVEGISKKDPDQLQARTANNRVVNFTGTPDMINQMIDLEITEAYTFSLRGKIVEA</sequence>
<name>MIAB_NEIMA</name>
<comment type="function">
    <text evidence="1">Catalyzes the methylthiolation of N6-(dimethylallyl)adenosine (i(6)A), leading to the formation of 2-methylthio-N6-(dimethylallyl)adenosine (ms(2)i(6)A) at position 37 in tRNAs that read codons beginning with uridine.</text>
</comment>
<comment type="catalytic activity">
    <reaction evidence="1">
        <text>N(6)-dimethylallyladenosine(37) in tRNA + (sulfur carrier)-SH + AH2 + 2 S-adenosyl-L-methionine = 2-methylsulfanyl-N(6)-dimethylallyladenosine(37) in tRNA + (sulfur carrier)-H + 5'-deoxyadenosine + L-methionine + A + S-adenosyl-L-homocysteine + 2 H(+)</text>
        <dbReference type="Rhea" id="RHEA:37067"/>
        <dbReference type="Rhea" id="RHEA-COMP:10375"/>
        <dbReference type="Rhea" id="RHEA-COMP:10376"/>
        <dbReference type="Rhea" id="RHEA-COMP:14737"/>
        <dbReference type="Rhea" id="RHEA-COMP:14739"/>
        <dbReference type="ChEBI" id="CHEBI:13193"/>
        <dbReference type="ChEBI" id="CHEBI:15378"/>
        <dbReference type="ChEBI" id="CHEBI:17319"/>
        <dbReference type="ChEBI" id="CHEBI:17499"/>
        <dbReference type="ChEBI" id="CHEBI:29917"/>
        <dbReference type="ChEBI" id="CHEBI:57844"/>
        <dbReference type="ChEBI" id="CHEBI:57856"/>
        <dbReference type="ChEBI" id="CHEBI:59789"/>
        <dbReference type="ChEBI" id="CHEBI:64428"/>
        <dbReference type="ChEBI" id="CHEBI:74415"/>
        <dbReference type="ChEBI" id="CHEBI:74417"/>
        <dbReference type="EC" id="2.8.4.3"/>
    </reaction>
</comment>
<comment type="cofactor">
    <cofactor evidence="1">
        <name>[4Fe-4S] cluster</name>
        <dbReference type="ChEBI" id="CHEBI:49883"/>
    </cofactor>
    <text evidence="1">Binds 2 [4Fe-4S] clusters. One cluster is coordinated with 3 cysteines and an exchangeable S-adenosyl-L-methionine.</text>
</comment>
<comment type="subunit">
    <text evidence="1">Monomer.</text>
</comment>
<comment type="subcellular location">
    <subcellularLocation>
        <location evidence="1">Cytoplasm</location>
    </subcellularLocation>
</comment>
<comment type="similarity">
    <text evidence="1">Belongs to the methylthiotransferase family. MiaB subfamily.</text>
</comment>
<protein>
    <recommendedName>
        <fullName evidence="1">tRNA-2-methylthio-N(6)-dimethylallyladenosine synthase</fullName>
        <ecNumber evidence="1">2.8.4.3</ecNumber>
    </recommendedName>
    <alternativeName>
        <fullName evidence="1">(Dimethylallyl)adenosine tRNA methylthiotransferase MiaB</fullName>
    </alternativeName>
    <alternativeName>
        <fullName evidence="1">tRNA-i(6)A37 methylthiotransferase</fullName>
    </alternativeName>
</protein>
<keyword id="KW-0004">4Fe-4S</keyword>
<keyword id="KW-0963">Cytoplasm</keyword>
<keyword id="KW-0408">Iron</keyword>
<keyword id="KW-0411">Iron-sulfur</keyword>
<keyword id="KW-0479">Metal-binding</keyword>
<keyword id="KW-0949">S-adenosyl-L-methionine</keyword>
<keyword id="KW-0808">Transferase</keyword>
<keyword id="KW-0819">tRNA processing</keyword>
<feature type="chain" id="PRO_0000374402" description="tRNA-2-methylthio-N(6)-dimethylallyladenosine synthase">
    <location>
        <begin position="1"/>
        <end position="442"/>
    </location>
</feature>
<feature type="domain" description="MTTase N-terminal" evidence="1">
    <location>
        <begin position="2"/>
        <end position="120"/>
    </location>
</feature>
<feature type="domain" description="Radical SAM core" evidence="2">
    <location>
        <begin position="143"/>
        <end position="375"/>
    </location>
</feature>
<feature type="domain" description="TRAM" evidence="1">
    <location>
        <begin position="378"/>
        <end position="441"/>
    </location>
</feature>
<feature type="binding site" evidence="1">
    <location>
        <position position="11"/>
    </location>
    <ligand>
        <name>[4Fe-4S] cluster</name>
        <dbReference type="ChEBI" id="CHEBI:49883"/>
        <label>1</label>
    </ligand>
</feature>
<feature type="binding site" evidence="1">
    <location>
        <position position="49"/>
    </location>
    <ligand>
        <name>[4Fe-4S] cluster</name>
        <dbReference type="ChEBI" id="CHEBI:49883"/>
        <label>1</label>
    </ligand>
</feature>
<feature type="binding site" evidence="1">
    <location>
        <position position="83"/>
    </location>
    <ligand>
        <name>[4Fe-4S] cluster</name>
        <dbReference type="ChEBI" id="CHEBI:49883"/>
        <label>1</label>
    </ligand>
</feature>
<feature type="binding site" evidence="1">
    <location>
        <position position="157"/>
    </location>
    <ligand>
        <name>[4Fe-4S] cluster</name>
        <dbReference type="ChEBI" id="CHEBI:49883"/>
        <label>2</label>
        <note>4Fe-4S-S-AdoMet</note>
    </ligand>
</feature>
<feature type="binding site" evidence="1">
    <location>
        <position position="161"/>
    </location>
    <ligand>
        <name>[4Fe-4S] cluster</name>
        <dbReference type="ChEBI" id="CHEBI:49883"/>
        <label>2</label>
        <note>4Fe-4S-S-AdoMet</note>
    </ligand>
</feature>
<feature type="binding site" evidence="1">
    <location>
        <position position="164"/>
    </location>
    <ligand>
        <name>[4Fe-4S] cluster</name>
        <dbReference type="ChEBI" id="CHEBI:49883"/>
        <label>2</label>
        <note>4Fe-4S-S-AdoMet</note>
    </ligand>
</feature>
<evidence type="ECO:0000255" key="1">
    <source>
        <dbReference type="HAMAP-Rule" id="MF_01864"/>
    </source>
</evidence>
<evidence type="ECO:0000255" key="2">
    <source>
        <dbReference type="PROSITE-ProRule" id="PRU01266"/>
    </source>
</evidence>
<proteinExistence type="inferred from homology"/>
<organism>
    <name type="scientific">Neisseria meningitidis serogroup A / serotype 4A (strain DSM 15465 / Z2491)</name>
    <dbReference type="NCBI Taxonomy" id="122587"/>
    <lineage>
        <taxon>Bacteria</taxon>
        <taxon>Pseudomonadati</taxon>
        <taxon>Pseudomonadota</taxon>
        <taxon>Betaproteobacteria</taxon>
        <taxon>Neisseriales</taxon>
        <taxon>Neisseriaceae</taxon>
        <taxon>Neisseria</taxon>
    </lineage>
</organism>